<accession>Q9ZD04</accession>
<feature type="chain" id="PRO_0000187936" description="DNA repair protein RadA">
    <location>
        <begin position="1"/>
        <end position="445"/>
    </location>
</feature>
<feature type="zinc finger region" description="C4-type" evidence="1">
    <location>
        <begin position="10"/>
        <end position="27"/>
    </location>
</feature>
<feature type="region of interest" description="Lon-protease-like" evidence="1">
    <location>
        <begin position="348"/>
        <end position="445"/>
    </location>
</feature>
<feature type="short sequence motif" description="RadA KNRFG motif" evidence="1">
    <location>
        <begin position="249"/>
        <end position="253"/>
    </location>
</feature>
<feature type="binding site" evidence="1">
    <location>
        <begin position="90"/>
        <end position="97"/>
    </location>
    <ligand>
        <name>ATP</name>
        <dbReference type="ChEBI" id="CHEBI:30616"/>
    </ligand>
</feature>
<protein>
    <recommendedName>
        <fullName evidence="1">DNA repair protein RadA</fullName>
        <ecNumber evidence="1">3.6.4.-</ecNumber>
    </recommendedName>
    <alternativeName>
        <fullName evidence="1">Branch migration protein RadA</fullName>
    </alternativeName>
</protein>
<dbReference type="EC" id="3.6.4.-" evidence="1"/>
<dbReference type="EMBL" id="AJ235272">
    <property type="protein sequence ID" value="CAA14995.1"/>
    <property type="status" value="ALT_INIT"/>
    <property type="molecule type" value="Genomic_DNA"/>
</dbReference>
<dbReference type="PIR" id="A71659">
    <property type="entry name" value="A71659"/>
</dbReference>
<dbReference type="RefSeq" id="NP_220919.1">
    <property type="nucleotide sequence ID" value="NC_000963.1"/>
</dbReference>
<dbReference type="SMR" id="Q9ZD04"/>
<dbReference type="STRING" id="272947.gene:17555626"/>
<dbReference type="MEROPS" id="S16.A04"/>
<dbReference type="EnsemblBacteria" id="CAA14995">
    <property type="protein sequence ID" value="CAA14995"/>
    <property type="gene ID" value="CAA14995"/>
</dbReference>
<dbReference type="KEGG" id="rpr:RP546"/>
<dbReference type="PATRIC" id="fig|272947.5.peg.557"/>
<dbReference type="eggNOG" id="COG1066">
    <property type="taxonomic scope" value="Bacteria"/>
</dbReference>
<dbReference type="HOGENOM" id="CLU_018264_0_1_5"/>
<dbReference type="OrthoDB" id="9803906at2"/>
<dbReference type="Proteomes" id="UP000002480">
    <property type="component" value="Chromosome"/>
</dbReference>
<dbReference type="GO" id="GO:0005829">
    <property type="term" value="C:cytosol"/>
    <property type="evidence" value="ECO:0007669"/>
    <property type="project" value="TreeGrafter"/>
</dbReference>
<dbReference type="GO" id="GO:0005524">
    <property type="term" value="F:ATP binding"/>
    <property type="evidence" value="ECO:0007669"/>
    <property type="project" value="UniProtKB-UniRule"/>
</dbReference>
<dbReference type="GO" id="GO:0016887">
    <property type="term" value="F:ATP hydrolysis activity"/>
    <property type="evidence" value="ECO:0007669"/>
    <property type="project" value="InterPro"/>
</dbReference>
<dbReference type="GO" id="GO:0140664">
    <property type="term" value="F:ATP-dependent DNA damage sensor activity"/>
    <property type="evidence" value="ECO:0007669"/>
    <property type="project" value="InterPro"/>
</dbReference>
<dbReference type="GO" id="GO:0003684">
    <property type="term" value="F:damaged DNA binding"/>
    <property type="evidence" value="ECO:0007669"/>
    <property type="project" value="InterPro"/>
</dbReference>
<dbReference type="GO" id="GO:0008270">
    <property type="term" value="F:zinc ion binding"/>
    <property type="evidence" value="ECO:0007669"/>
    <property type="project" value="UniProtKB-KW"/>
</dbReference>
<dbReference type="GO" id="GO:0000725">
    <property type="term" value="P:recombinational repair"/>
    <property type="evidence" value="ECO:0007669"/>
    <property type="project" value="UniProtKB-UniRule"/>
</dbReference>
<dbReference type="CDD" id="cd01121">
    <property type="entry name" value="RadA_SMS_N"/>
    <property type="match status" value="1"/>
</dbReference>
<dbReference type="FunFam" id="3.40.50.300:FF:000050">
    <property type="entry name" value="DNA repair protein RadA"/>
    <property type="match status" value="1"/>
</dbReference>
<dbReference type="Gene3D" id="3.30.230.10">
    <property type="match status" value="1"/>
</dbReference>
<dbReference type="Gene3D" id="3.40.50.300">
    <property type="entry name" value="P-loop containing nucleotide triphosphate hydrolases"/>
    <property type="match status" value="1"/>
</dbReference>
<dbReference type="HAMAP" id="MF_01498">
    <property type="entry name" value="RadA_bact"/>
    <property type="match status" value="1"/>
</dbReference>
<dbReference type="InterPro" id="IPR003593">
    <property type="entry name" value="AAA+_ATPase"/>
</dbReference>
<dbReference type="InterPro" id="IPR004504">
    <property type="entry name" value="DNA_repair_RadA"/>
</dbReference>
<dbReference type="InterPro" id="IPR014774">
    <property type="entry name" value="KaiC-like_dom"/>
</dbReference>
<dbReference type="InterPro" id="IPR027417">
    <property type="entry name" value="P-loop_NTPase"/>
</dbReference>
<dbReference type="InterPro" id="IPR020588">
    <property type="entry name" value="RecA_ATP-bd"/>
</dbReference>
<dbReference type="InterPro" id="IPR020568">
    <property type="entry name" value="Ribosomal_Su5_D2-typ_SF"/>
</dbReference>
<dbReference type="InterPro" id="IPR014721">
    <property type="entry name" value="Ribsml_uS5_D2-typ_fold_subgr"/>
</dbReference>
<dbReference type="InterPro" id="IPR041166">
    <property type="entry name" value="Rubredoxin_2"/>
</dbReference>
<dbReference type="NCBIfam" id="TIGR00416">
    <property type="entry name" value="sms"/>
    <property type="match status" value="1"/>
</dbReference>
<dbReference type="PANTHER" id="PTHR32472">
    <property type="entry name" value="DNA REPAIR PROTEIN RADA"/>
    <property type="match status" value="1"/>
</dbReference>
<dbReference type="PANTHER" id="PTHR32472:SF10">
    <property type="entry name" value="DNA REPAIR PROTEIN RADA-LIKE PROTEIN"/>
    <property type="match status" value="1"/>
</dbReference>
<dbReference type="Pfam" id="PF06745">
    <property type="entry name" value="ATPase"/>
    <property type="match status" value="1"/>
</dbReference>
<dbReference type="Pfam" id="PF13541">
    <property type="entry name" value="ChlI"/>
    <property type="match status" value="1"/>
</dbReference>
<dbReference type="Pfam" id="PF18073">
    <property type="entry name" value="Zn_ribbon_LapB"/>
    <property type="match status" value="1"/>
</dbReference>
<dbReference type="PRINTS" id="PR01874">
    <property type="entry name" value="DNAREPAIRADA"/>
</dbReference>
<dbReference type="SMART" id="SM00382">
    <property type="entry name" value="AAA"/>
    <property type="match status" value="1"/>
</dbReference>
<dbReference type="SUPFAM" id="SSF52540">
    <property type="entry name" value="P-loop containing nucleoside triphosphate hydrolases"/>
    <property type="match status" value="1"/>
</dbReference>
<dbReference type="SUPFAM" id="SSF54211">
    <property type="entry name" value="Ribosomal protein S5 domain 2-like"/>
    <property type="match status" value="1"/>
</dbReference>
<dbReference type="PROSITE" id="PS50162">
    <property type="entry name" value="RECA_2"/>
    <property type="match status" value="1"/>
</dbReference>
<proteinExistence type="inferred from homology"/>
<reference key="1">
    <citation type="journal article" date="1998" name="Nature">
        <title>The genome sequence of Rickettsia prowazekii and the origin of mitochondria.</title>
        <authorList>
            <person name="Andersson S.G.E."/>
            <person name="Zomorodipour A."/>
            <person name="Andersson J.O."/>
            <person name="Sicheritz-Ponten T."/>
            <person name="Alsmark U.C.M."/>
            <person name="Podowski R.M."/>
            <person name="Naeslund A.K."/>
            <person name="Eriksson A.-S."/>
            <person name="Winkler H.H."/>
            <person name="Kurland C.G."/>
        </authorList>
    </citation>
    <scope>NUCLEOTIDE SEQUENCE [LARGE SCALE GENOMIC DNA]</scope>
    <source>
        <strain>Madrid E</strain>
    </source>
</reference>
<evidence type="ECO:0000255" key="1">
    <source>
        <dbReference type="HAMAP-Rule" id="MF_01498"/>
    </source>
</evidence>
<evidence type="ECO:0000305" key="2"/>
<keyword id="KW-0067">ATP-binding</keyword>
<keyword id="KW-0227">DNA damage</keyword>
<keyword id="KW-0234">DNA repair</keyword>
<keyword id="KW-0238">DNA-binding</keyword>
<keyword id="KW-0378">Hydrolase</keyword>
<keyword id="KW-0479">Metal-binding</keyword>
<keyword id="KW-0547">Nucleotide-binding</keyword>
<keyword id="KW-1185">Reference proteome</keyword>
<keyword id="KW-0346">Stress response</keyword>
<keyword id="KW-0862">Zinc</keyword>
<keyword id="KW-0863">Zinc-finger</keyword>
<name>RADA_RICPR</name>
<organism>
    <name type="scientific">Rickettsia prowazekii (strain Madrid E)</name>
    <dbReference type="NCBI Taxonomy" id="272947"/>
    <lineage>
        <taxon>Bacteria</taxon>
        <taxon>Pseudomonadati</taxon>
        <taxon>Pseudomonadota</taxon>
        <taxon>Alphaproteobacteria</taxon>
        <taxon>Rickettsiales</taxon>
        <taxon>Rickettsiaceae</taxon>
        <taxon>Rickettsieae</taxon>
        <taxon>Rickettsia</taxon>
        <taxon>typhus group</taxon>
    </lineage>
</organism>
<gene>
    <name evidence="1" type="primary">radA</name>
    <name type="ordered locus">RP546</name>
</gene>
<comment type="function">
    <text evidence="1">DNA-dependent ATPase involved in processing of recombination intermediates, plays a role in repairing DNA breaks. Stimulates the branch migration of RecA-mediated strand transfer reactions, allowing the 3' invading strand to extend heteroduplex DNA faster. Binds ssDNA in the presence of ADP but not other nucleotides, has ATPase activity that is stimulated by ssDNA and various branched DNA structures, but inhibited by SSB. Does not have RecA's homology-searching function.</text>
</comment>
<comment type="domain">
    <text evidence="1">Has a putative N-terminal zinc-finger, a middle region with homology to RecA with ATPase motifs including the RadA KNRFG motif, while the C-terminus is homologous to Lon protease.</text>
</comment>
<comment type="similarity">
    <text evidence="1">Belongs to the RecA family. RadA subfamily.</text>
</comment>
<comment type="sequence caution" evidence="2">
    <conflict type="erroneous initiation">
        <sequence resource="EMBL-CDS" id="CAA14995"/>
    </conflict>
    <text>Extended N-terminus.</text>
</comment>
<sequence>MTRDKKYYICSNCANISNKWSGQCFDCGVWGSIVEEIINTNKSIIKGSKQTFDKLSCNVSEQLRIPTPICELNRVLGGGLVLGSAILIGGEPGIGKSTLLLQLTASNFESEMRCLYITGEESLDQIKLRAIRLNITNYNTAILAATNLEDIIASIDDNNNNIDLVVIDSIQTITTKELSSPPGTVSQIRTCANELVNYSKQNNIIILLSCHVTKDGQIAGPKILEHLVDTVLYFEGDHNNHFRILRSYKNRFGGVGEIGVFEMSNSGIIEVTNHSELFLIKREHNVVGTSIFAGIEGSRPLLMEVQALIVPSNMVTPRRSAVGWDANRLSMILAVLSSRIGLNLANYEIYLSIAGGLKIADPASDLAVAASLISAATSIPLPEHSVFFGEISLSGEIRKTAKAETRIKEAVKLGFNKVICSKLENLTYDFIFPCAHLQELKEIIK</sequence>